<proteinExistence type="evidence at transcript level"/>
<dbReference type="EMBL" id="AY073771">
    <property type="protein sequence ID" value="AAL61434.1"/>
    <property type="molecule type" value="Genomic_DNA"/>
</dbReference>
<dbReference type="EMBL" id="AY317272">
    <property type="protein sequence ID" value="AAP70777.1"/>
    <property type="molecule type" value="Genomic_DNA"/>
</dbReference>
<dbReference type="EMBL" id="BC119304">
    <property type="protein sequence ID" value="AAI19305.1"/>
    <property type="molecule type" value="mRNA"/>
</dbReference>
<dbReference type="EMBL" id="BC119306">
    <property type="protein sequence ID" value="AAI19307.1"/>
    <property type="molecule type" value="mRNA"/>
</dbReference>
<dbReference type="CCDS" id="CCDS28243.1"/>
<dbReference type="SMR" id="Q8VEX6"/>
<dbReference type="FunCoup" id="Q8VEX6">
    <property type="interactions" value="461"/>
</dbReference>
<dbReference type="STRING" id="10090.ENSMUSP00000147035"/>
<dbReference type="GlyCosmos" id="Q8VEX6">
    <property type="glycosylation" value="1 site, No reported glycans"/>
</dbReference>
<dbReference type="GlyGen" id="Q8VEX6">
    <property type="glycosylation" value="1 site"/>
</dbReference>
<dbReference type="PhosphoSitePlus" id="Q8VEX6"/>
<dbReference type="PaxDb" id="10090-ENSMUSP00000052477"/>
<dbReference type="AGR" id="MGI:3030021"/>
<dbReference type="MGI" id="MGI:3030021">
    <property type="gene designation" value="Or5h19"/>
</dbReference>
<dbReference type="eggNOG" id="ENOG502T9JQ">
    <property type="taxonomic scope" value="Eukaryota"/>
</dbReference>
<dbReference type="InParanoid" id="Q8VEX6"/>
<dbReference type="PhylomeDB" id="Q8VEX6"/>
<dbReference type="PRO" id="PR:Q8VEX6"/>
<dbReference type="Proteomes" id="UP000000589">
    <property type="component" value="Unplaced"/>
</dbReference>
<dbReference type="RNAct" id="Q8VEX6">
    <property type="molecule type" value="protein"/>
</dbReference>
<dbReference type="GO" id="GO:0016020">
    <property type="term" value="C:membrane"/>
    <property type="evidence" value="ECO:0000247"/>
    <property type="project" value="MGI"/>
</dbReference>
<dbReference type="GO" id="GO:0005886">
    <property type="term" value="C:plasma membrane"/>
    <property type="evidence" value="ECO:0007669"/>
    <property type="project" value="UniProtKB-SubCell"/>
</dbReference>
<dbReference type="GO" id="GO:0004930">
    <property type="term" value="F:G protein-coupled receptor activity"/>
    <property type="evidence" value="ECO:0007669"/>
    <property type="project" value="UniProtKB-KW"/>
</dbReference>
<dbReference type="GO" id="GO:0004984">
    <property type="term" value="F:olfactory receptor activity"/>
    <property type="evidence" value="ECO:0000247"/>
    <property type="project" value="MGI"/>
</dbReference>
<dbReference type="GO" id="GO:0007186">
    <property type="term" value="P:G protein-coupled receptor signaling pathway"/>
    <property type="evidence" value="ECO:0000247"/>
    <property type="project" value="MGI"/>
</dbReference>
<dbReference type="GO" id="GO:0007608">
    <property type="term" value="P:sensory perception of smell"/>
    <property type="evidence" value="ECO:0000247"/>
    <property type="project" value="MGI"/>
</dbReference>
<dbReference type="FunFam" id="1.20.1070.10:FF:000004">
    <property type="entry name" value="Olfactory receptor"/>
    <property type="match status" value="1"/>
</dbReference>
<dbReference type="Gene3D" id="1.20.1070.10">
    <property type="entry name" value="Rhodopsin 7-helix transmembrane proteins"/>
    <property type="match status" value="1"/>
</dbReference>
<dbReference type="InterPro" id="IPR000276">
    <property type="entry name" value="GPCR_Rhodpsn"/>
</dbReference>
<dbReference type="InterPro" id="IPR017452">
    <property type="entry name" value="GPCR_Rhodpsn_7TM"/>
</dbReference>
<dbReference type="InterPro" id="IPR000725">
    <property type="entry name" value="Olfact_rcpt"/>
</dbReference>
<dbReference type="PANTHER" id="PTHR48018">
    <property type="entry name" value="OLFACTORY RECEPTOR"/>
    <property type="match status" value="1"/>
</dbReference>
<dbReference type="Pfam" id="PF13853">
    <property type="entry name" value="7tm_4"/>
    <property type="match status" value="1"/>
</dbReference>
<dbReference type="PRINTS" id="PR00237">
    <property type="entry name" value="GPCRRHODOPSN"/>
</dbReference>
<dbReference type="PRINTS" id="PR00245">
    <property type="entry name" value="OLFACTORYR"/>
</dbReference>
<dbReference type="SUPFAM" id="SSF81321">
    <property type="entry name" value="Family A G protein-coupled receptor-like"/>
    <property type="match status" value="1"/>
</dbReference>
<dbReference type="PROSITE" id="PS00237">
    <property type="entry name" value="G_PROTEIN_RECEP_F1_1"/>
    <property type="match status" value="1"/>
</dbReference>
<dbReference type="PROSITE" id="PS50262">
    <property type="entry name" value="G_PROTEIN_RECEP_F1_2"/>
    <property type="match status" value="1"/>
</dbReference>
<accession>Q8VEX6</accession>
<gene>
    <name evidence="4" type="primary">Or5h19</name>
    <name evidence="4" type="synonym">Mor183-8</name>
    <name evidence="4" type="synonym">Olfr187</name>
</gene>
<comment type="function">
    <text>Potential odorant receptor.</text>
</comment>
<comment type="subcellular location">
    <subcellularLocation>
        <location evidence="3">Cell membrane</location>
        <topology evidence="1">Multi-pass membrane protein</topology>
    </subcellularLocation>
</comment>
<comment type="similarity">
    <text evidence="2">Belongs to the G-protein coupled receptor 1 family.</text>
</comment>
<feature type="chain" id="PRO_0000269659" description="Olfactory receptor 5H19">
    <location>
        <begin position="1"/>
        <end position="308"/>
    </location>
</feature>
<feature type="topological domain" description="Extracellular" evidence="1">
    <location>
        <begin position="1"/>
        <end position="27"/>
    </location>
</feature>
<feature type="transmembrane region" description="Helical; Name=1" evidence="1">
    <location>
        <begin position="28"/>
        <end position="48"/>
    </location>
</feature>
<feature type="topological domain" description="Cytoplasmic" evidence="1">
    <location>
        <begin position="49"/>
        <end position="55"/>
    </location>
</feature>
<feature type="transmembrane region" description="Helical; Name=2" evidence="1">
    <location>
        <begin position="56"/>
        <end position="76"/>
    </location>
</feature>
<feature type="topological domain" description="Extracellular" evidence="1">
    <location>
        <begin position="77"/>
        <end position="92"/>
    </location>
</feature>
<feature type="transmembrane region" description="Helical; Name=3" evidence="1">
    <location>
        <begin position="93"/>
        <end position="113"/>
    </location>
</feature>
<feature type="topological domain" description="Cytoplasmic" evidence="1">
    <location>
        <begin position="114"/>
        <end position="143"/>
    </location>
</feature>
<feature type="transmembrane region" description="Helical; Name=4" evidence="1">
    <location>
        <begin position="144"/>
        <end position="164"/>
    </location>
</feature>
<feature type="topological domain" description="Extracellular" evidence="1">
    <location>
        <begin position="165"/>
        <end position="197"/>
    </location>
</feature>
<feature type="transmembrane region" description="Helical; Name=5" evidence="1">
    <location>
        <begin position="198"/>
        <end position="218"/>
    </location>
</feature>
<feature type="topological domain" description="Cytoplasmic" evidence="1">
    <location>
        <begin position="219"/>
        <end position="238"/>
    </location>
</feature>
<feature type="transmembrane region" description="Helical; Name=6" evidence="1">
    <location>
        <begin position="239"/>
        <end position="259"/>
    </location>
</feature>
<feature type="topological domain" description="Extracellular" evidence="1">
    <location>
        <begin position="260"/>
        <end position="270"/>
    </location>
</feature>
<feature type="transmembrane region" description="Helical; Name=7" evidence="1">
    <location>
        <begin position="271"/>
        <end position="291"/>
    </location>
</feature>
<feature type="topological domain" description="Cytoplasmic" evidence="1">
    <location>
        <begin position="292"/>
        <end position="308"/>
    </location>
</feature>
<feature type="glycosylation site" description="N-linked (GlcNAc...) asparagine" evidence="1">
    <location>
        <position position="4"/>
    </location>
</feature>
<feature type="disulfide bond" evidence="2">
    <location>
        <begin position="96"/>
        <end position="188"/>
    </location>
</feature>
<name>O5H19_MOUSE</name>
<reference key="1">
    <citation type="journal article" date="2002" name="Nat. Neurosci.">
        <title>The olfactory receptor gene superfamily of the mouse.</title>
        <authorList>
            <person name="Zhang X."/>
            <person name="Firestein S."/>
        </authorList>
    </citation>
    <scope>NUCLEOTIDE SEQUENCE [GENOMIC DNA]</scope>
</reference>
<reference key="2">
    <citation type="journal article" date="2002" name="Hum. Mol. Genet.">
        <title>Different evolutionary processes shaped the mouse and human olfactory receptor gene families.</title>
        <authorList>
            <person name="Young J.M."/>
            <person name="Friedman C."/>
            <person name="Williams E.M."/>
            <person name="Ross J.A."/>
            <person name="Tonnes-Priddy L."/>
            <person name="Trask B.J."/>
        </authorList>
    </citation>
    <scope>NUCLEOTIDE SEQUENCE [GENOMIC DNA]</scope>
</reference>
<reference key="3">
    <citation type="journal article" date="2002" name="Hum. Mol. Genet.">
        <authorList>
            <person name="Young J.M."/>
            <person name="Friedman C."/>
            <person name="Williams E.M."/>
            <person name="Ross J.A."/>
            <person name="Tonnes-Priddy L."/>
            <person name="Trask B.J."/>
        </authorList>
    </citation>
    <scope>ERRATUM OF PUBMED:11875048</scope>
</reference>
<reference key="4">
    <citation type="journal article" date="2004" name="Genome Res.">
        <title>The status, quality, and expansion of the NIH full-length cDNA project: the Mammalian Gene Collection (MGC).</title>
        <authorList>
            <consortium name="The MGC Project Team"/>
        </authorList>
    </citation>
    <scope>NUCLEOTIDE SEQUENCE [LARGE SCALE MRNA]</scope>
    <source>
        <tissue>Brain</tissue>
    </source>
</reference>
<organism>
    <name type="scientific">Mus musculus</name>
    <name type="common">Mouse</name>
    <dbReference type="NCBI Taxonomy" id="10090"/>
    <lineage>
        <taxon>Eukaryota</taxon>
        <taxon>Metazoa</taxon>
        <taxon>Chordata</taxon>
        <taxon>Craniata</taxon>
        <taxon>Vertebrata</taxon>
        <taxon>Euteleostomi</taxon>
        <taxon>Mammalia</taxon>
        <taxon>Eutheria</taxon>
        <taxon>Euarchontoglires</taxon>
        <taxon>Glires</taxon>
        <taxon>Rodentia</taxon>
        <taxon>Myomorpha</taxon>
        <taxon>Muroidea</taxon>
        <taxon>Muridae</taxon>
        <taxon>Murinae</taxon>
        <taxon>Mus</taxon>
        <taxon>Mus</taxon>
    </lineage>
</organism>
<protein>
    <recommendedName>
        <fullName evidence="3">Olfactory receptor 5H19</fullName>
    </recommendedName>
    <alternativeName>
        <fullName>Olfactory receptor 183-8</fullName>
    </alternativeName>
    <alternativeName>
        <fullName>Olfactory receptor 187</fullName>
    </alternativeName>
</protein>
<evidence type="ECO:0000255" key="1"/>
<evidence type="ECO:0000255" key="2">
    <source>
        <dbReference type="PROSITE-ProRule" id="PRU00521"/>
    </source>
</evidence>
<evidence type="ECO:0000305" key="3"/>
<evidence type="ECO:0000312" key="4">
    <source>
        <dbReference type="MGI" id="MGI:3030021"/>
    </source>
</evidence>
<keyword id="KW-1003">Cell membrane</keyword>
<keyword id="KW-1015">Disulfide bond</keyword>
<keyword id="KW-0297">G-protein coupled receptor</keyword>
<keyword id="KW-0325">Glycoprotein</keyword>
<keyword id="KW-0472">Membrane</keyword>
<keyword id="KW-0552">Olfaction</keyword>
<keyword id="KW-0675">Receptor</keyword>
<keyword id="KW-1185">Reference proteome</keyword>
<keyword id="KW-0716">Sensory transduction</keyword>
<keyword id="KW-0807">Transducer</keyword>
<keyword id="KW-0812">Transmembrane</keyword>
<keyword id="KW-1133">Transmembrane helix</keyword>
<sequence length="308" mass="34648">MEKNATLLTEFVLTGLSHQPLWNIPLFLVFLVIYLITIVGNVSLITLIWTDPHLHIPMYLFLGSLAFVDTSISSIVVPKMLLNFFGKSKVITLSECMAQFFLFNISATTECFLLAAMAYDRYVAICKPLLYPVVMTNGLCVWLIALSFVAGIIHALIHEGFLLRLTFCNSNMIHNFYCDIISLLKISCTDTSLNYLIVFIFSGSIQVFTISTILVSYTIILFTILKKKSAKGIKKAFSTCGAHLLSVSLYYGPLLFMYVHPASSEVDDQDMIDSLFYTVIIPVLNPIIYSLRNKQVIDSLAKFLKRNV</sequence>